<name>FDHE_PASMU</name>
<comment type="function">
    <text evidence="1">Necessary for formate dehydrogenase activity.</text>
</comment>
<comment type="subcellular location">
    <subcellularLocation>
        <location evidence="1">Cytoplasm</location>
    </subcellularLocation>
</comment>
<comment type="similarity">
    <text evidence="1">Belongs to the FdhE family.</text>
</comment>
<sequence>MSIRILPDSEIKAAASSFHAPALLFANPKNLYQRRIARFTSLSNAHPLEDYLHFASQVAEAQLAVLQQQPIAQDPRLSAEKLSAEDLAKQPLNAQRWQRDPVWQTLLMAILAEMKPKANETILNTIETLEKYSKAERDSIADKLLAQEFEQISSAQAVFIWAALSLYWLQLVQQIPHSSHKESGESLHVCPICASAPVTSVIHFGAEQGLRYLHCALCETEWNMVRSKCTNCDQTGKLDYWSLDSEIAAVKAESCGDCHSYLKALYQERDPKVEAVADDLASIFLDVEMEEKGLQRSGLNPFLFPNPEA</sequence>
<dbReference type="EMBL" id="AE004439">
    <property type="protein sequence ID" value="AAK02489.1"/>
    <property type="molecule type" value="Genomic_DNA"/>
</dbReference>
<dbReference type="RefSeq" id="WP_010906628.1">
    <property type="nucleotide sequence ID" value="NC_002663.1"/>
</dbReference>
<dbReference type="SMR" id="Q9CNM2"/>
<dbReference type="STRING" id="272843.PM0405"/>
<dbReference type="EnsemblBacteria" id="AAK02489">
    <property type="protein sequence ID" value="AAK02489"/>
    <property type="gene ID" value="PM0405"/>
</dbReference>
<dbReference type="KEGG" id="pmu:PM0405"/>
<dbReference type="PATRIC" id="fig|272843.6.peg.418"/>
<dbReference type="HOGENOM" id="CLU_055275_0_0_6"/>
<dbReference type="OrthoDB" id="9794151at2"/>
<dbReference type="Proteomes" id="UP000000809">
    <property type="component" value="Chromosome"/>
</dbReference>
<dbReference type="GO" id="GO:0005829">
    <property type="term" value="C:cytosol"/>
    <property type="evidence" value="ECO:0007669"/>
    <property type="project" value="TreeGrafter"/>
</dbReference>
<dbReference type="GO" id="GO:0008199">
    <property type="term" value="F:ferric iron binding"/>
    <property type="evidence" value="ECO:0007669"/>
    <property type="project" value="TreeGrafter"/>
</dbReference>
<dbReference type="GO" id="GO:0051604">
    <property type="term" value="P:protein maturation"/>
    <property type="evidence" value="ECO:0007669"/>
    <property type="project" value="TreeGrafter"/>
</dbReference>
<dbReference type="CDD" id="cd16341">
    <property type="entry name" value="FdhE"/>
    <property type="match status" value="1"/>
</dbReference>
<dbReference type="FunFam" id="3.90.1670.10:FF:000001">
    <property type="entry name" value="Protein FdhE"/>
    <property type="match status" value="1"/>
</dbReference>
<dbReference type="Gene3D" id="3.90.1670.10">
    <property type="entry name" value="FdhE-like domain"/>
    <property type="match status" value="1"/>
</dbReference>
<dbReference type="HAMAP" id="MF_00611">
    <property type="entry name" value="FdeH"/>
    <property type="match status" value="1"/>
</dbReference>
<dbReference type="InterPro" id="IPR024064">
    <property type="entry name" value="FdhE-like_sf"/>
</dbReference>
<dbReference type="InterPro" id="IPR056796">
    <property type="entry name" value="FdhE_C"/>
</dbReference>
<dbReference type="InterPro" id="IPR056797">
    <property type="entry name" value="FdhE_central"/>
</dbReference>
<dbReference type="InterPro" id="IPR056774">
    <property type="entry name" value="FdhE_N"/>
</dbReference>
<dbReference type="InterPro" id="IPR006452">
    <property type="entry name" value="Formate_DH_accessory"/>
</dbReference>
<dbReference type="NCBIfam" id="TIGR01562">
    <property type="entry name" value="FdhE"/>
    <property type="match status" value="1"/>
</dbReference>
<dbReference type="NCBIfam" id="NF002925">
    <property type="entry name" value="PRK03564.1"/>
    <property type="match status" value="1"/>
</dbReference>
<dbReference type="PANTHER" id="PTHR37689">
    <property type="entry name" value="PROTEIN FDHE"/>
    <property type="match status" value="1"/>
</dbReference>
<dbReference type="PANTHER" id="PTHR37689:SF1">
    <property type="entry name" value="PROTEIN FDHE"/>
    <property type="match status" value="1"/>
</dbReference>
<dbReference type="Pfam" id="PF24860">
    <property type="entry name" value="FdhE_C"/>
    <property type="match status" value="1"/>
</dbReference>
<dbReference type="Pfam" id="PF24859">
    <property type="entry name" value="FdhE_central"/>
    <property type="match status" value="1"/>
</dbReference>
<dbReference type="Pfam" id="PF04216">
    <property type="entry name" value="FdhE_N"/>
    <property type="match status" value="1"/>
</dbReference>
<dbReference type="PIRSF" id="PIRSF018296">
    <property type="entry name" value="Format_dh_formtn"/>
    <property type="match status" value="1"/>
</dbReference>
<dbReference type="SUPFAM" id="SSF144020">
    <property type="entry name" value="FdhE-like"/>
    <property type="match status" value="1"/>
</dbReference>
<proteinExistence type="inferred from homology"/>
<reference key="1">
    <citation type="journal article" date="2001" name="Proc. Natl. Acad. Sci. U.S.A.">
        <title>Complete genomic sequence of Pasteurella multocida Pm70.</title>
        <authorList>
            <person name="May B.J."/>
            <person name="Zhang Q."/>
            <person name="Li L.L."/>
            <person name="Paustian M.L."/>
            <person name="Whittam T.S."/>
            <person name="Kapur V."/>
        </authorList>
    </citation>
    <scope>NUCLEOTIDE SEQUENCE [LARGE SCALE GENOMIC DNA]</scope>
    <source>
        <strain>Pm70</strain>
    </source>
</reference>
<organism>
    <name type="scientific">Pasteurella multocida (strain Pm70)</name>
    <dbReference type="NCBI Taxonomy" id="272843"/>
    <lineage>
        <taxon>Bacteria</taxon>
        <taxon>Pseudomonadati</taxon>
        <taxon>Pseudomonadota</taxon>
        <taxon>Gammaproteobacteria</taxon>
        <taxon>Pasteurellales</taxon>
        <taxon>Pasteurellaceae</taxon>
        <taxon>Pasteurella</taxon>
    </lineage>
</organism>
<evidence type="ECO:0000255" key="1">
    <source>
        <dbReference type="HAMAP-Rule" id="MF_00611"/>
    </source>
</evidence>
<accession>Q9CNM2</accession>
<gene>
    <name evidence="1" type="primary">fdhE</name>
    <name type="ordered locus">PM0405</name>
</gene>
<keyword id="KW-0963">Cytoplasm</keyword>
<keyword id="KW-1185">Reference proteome</keyword>
<feature type="chain" id="PRO_0000189643" description="Protein FdhE homolog">
    <location>
        <begin position="1"/>
        <end position="309"/>
    </location>
</feature>
<protein>
    <recommendedName>
        <fullName evidence="1">Protein FdhE homolog</fullName>
    </recommendedName>
</protein>